<dbReference type="EMBL" id="CP000482">
    <property type="protein sequence ID" value="ABK98300.1"/>
    <property type="molecule type" value="Genomic_DNA"/>
</dbReference>
<dbReference type="RefSeq" id="WP_011734613.1">
    <property type="nucleotide sequence ID" value="NC_008609.1"/>
</dbReference>
<dbReference type="SMR" id="A1ALT0"/>
<dbReference type="STRING" id="338966.Ppro_0669"/>
<dbReference type="KEGG" id="ppd:Ppro_0669"/>
<dbReference type="eggNOG" id="COG0080">
    <property type="taxonomic scope" value="Bacteria"/>
</dbReference>
<dbReference type="HOGENOM" id="CLU_074237_2_1_7"/>
<dbReference type="OrthoDB" id="9802408at2"/>
<dbReference type="Proteomes" id="UP000006732">
    <property type="component" value="Chromosome"/>
</dbReference>
<dbReference type="GO" id="GO:0022625">
    <property type="term" value="C:cytosolic large ribosomal subunit"/>
    <property type="evidence" value="ECO:0007669"/>
    <property type="project" value="TreeGrafter"/>
</dbReference>
<dbReference type="GO" id="GO:0070180">
    <property type="term" value="F:large ribosomal subunit rRNA binding"/>
    <property type="evidence" value="ECO:0007669"/>
    <property type="project" value="UniProtKB-UniRule"/>
</dbReference>
<dbReference type="GO" id="GO:0003735">
    <property type="term" value="F:structural constituent of ribosome"/>
    <property type="evidence" value="ECO:0007669"/>
    <property type="project" value="InterPro"/>
</dbReference>
<dbReference type="GO" id="GO:0006412">
    <property type="term" value="P:translation"/>
    <property type="evidence" value="ECO:0007669"/>
    <property type="project" value="UniProtKB-UniRule"/>
</dbReference>
<dbReference type="CDD" id="cd00349">
    <property type="entry name" value="Ribosomal_L11"/>
    <property type="match status" value="1"/>
</dbReference>
<dbReference type="FunFam" id="1.10.10.250:FF:000001">
    <property type="entry name" value="50S ribosomal protein L11"/>
    <property type="match status" value="1"/>
</dbReference>
<dbReference type="FunFam" id="3.30.1550.10:FF:000001">
    <property type="entry name" value="50S ribosomal protein L11"/>
    <property type="match status" value="1"/>
</dbReference>
<dbReference type="Gene3D" id="1.10.10.250">
    <property type="entry name" value="Ribosomal protein L11, C-terminal domain"/>
    <property type="match status" value="1"/>
</dbReference>
<dbReference type="Gene3D" id="3.30.1550.10">
    <property type="entry name" value="Ribosomal protein L11/L12, N-terminal domain"/>
    <property type="match status" value="1"/>
</dbReference>
<dbReference type="HAMAP" id="MF_00736">
    <property type="entry name" value="Ribosomal_uL11"/>
    <property type="match status" value="1"/>
</dbReference>
<dbReference type="InterPro" id="IPR000911">
    <property type="entry name" value="Ribosomal_uL11"/>
</dbReference>
<dbReference type="InterPro" id="IPR006519">
    <property type="entry name" value="Ribosomal_uL11_bac-typ"/>
</dbReference>
<dbReference type="InterPro" id="IPR020783">
    <property type="entry name" value="Ribosomal_uL11_C"/>
</dbReference>
<dbReference type="InterPro" id="IPR036769">
    <property type="entry name" value="Ribosomal_uL11_C_sf"/>
</dbReference>
<dbReference type="InterPro" id="IPR020784">
    <property type="entry name" value="Ribosomal_uL11_N"/>
</dbReference>
<dbReference type="InterPro" id="IPR036796">
    <property type="entry name" value="Ribosomal_uL11_N_sf"/>
</dbReference>
<dbReference type="NCBIfam" id="TIGR01632">
    <property type="entry name" value="L11_bact"/>
    <property type="match status" value="1"/>
</dbReference>
<dbReference type="PANTHER" id="PTHR11661">
    <property type="entry name" value="60S RIBOSOMAL PROTEIN L12"/>
    <property type="match status" value="1"/>
</dbReference>
<dbReference type="PANTHER" id="PTHR11661:SF1">
    <property type="entry name" value="LARGE RIBOSOMAL SUBUNIT PROTEIN UL11M"/>
    <property type="match status" value="1"/>
</dbReference>
<dbReference type="Pfam" id="PF00298">
    <property type="entry name" value="Ribosomal_L11"/>
    <property type="match status" value="1"/>
</dbReference>
<dbReference type="Pfam" id="PF03946">
    <property type="entry name" value="Ribosomal_L11_N"/>
    <property type="match status" value="1"/>
</dbReference>
<dbReference type="SMART" id="SM00649">
    <property type="entry name" value="RL11"/>
    <property type="match status" value="1"/>
</dbReference>
<dbReference type="SUPFAM" id="SSF54747">
    <property type="entry name" value="Ribosomal L11/L12e N-terminal domain"/>
    <property type="match status" value="1"/>
</dbReference>
<dbReference type="SUPFAM" id="SSF46906">
    <property type="entry name" value="Ribosomal protein L11, C-terminal domain"/>
    <property type="match status" value="1"/>
</dbReference>
<protein>
    <recommendedName>
        <fullName evidence="1">Large ribosomal subunit protein uL11</fullName>
    </recommendedName>
    <alternativeName>
        <fullName evidence="2">50S ribosomal protein L11</fullName>
    </alternativeName>
</protein>
<name>RL11_PELPD</name>
<sequence length="140" mass="14618">MAKKITGYIKLQVPAGKANPAPPIGPALGQHGVNIMEFCKAFNAKTQADEGTITPVVITVYADRSFTFITKTPPVPVLIKKAAGIASGSAVPNKTKVGKLTKAQVEEIAKTKMPDLNAASLEAAMRTVEGTARSMGVDIV</sequence>
<proteinExistence type="inferred from homology"/>
<reference key="1">
    <citation type="submission" date="2006-10" db="EMBL/GenBank/DDBJ databases">
        <title>Complete sequence of chromosome of Pelobacter propionicus DSM 2379.</title>
        <authorList>
            <consortium name="US DOE Joint Genome Institute"/>
            <person name="Copeland A."/>
            <person name="Lucas S."/>
            <person name="Lapidus A."/>
            <person name="Barry K."/>
            <person name="Detter J.C."/>
            <person name="Glavina del Rio T."/>
            <person name="Hammon N."/>
            <person name="Israni S."/>
            <person name="Dalin E."/>
            <person name="Tice H."/>
            <person name="Pitluck S."/>
            <person name="Saunders E."/>
            <person name="Brettin T."/>
            <person name="Bruce D."/>
            <person name="Han C."/>
            <person name="Tapia R."/>
            <person name="Schmutz J."/>
            <person name="Larimer F."/>
            <person name="Land M."/>
            <person name="Hauser L."/>
            <person name="Kyrpides N."/>
            <person name="Kim E."/>
            <person name="Lovley D."/>
            <person name="Richardson P."/>
        </authorList>
    </citation>
    <scope>NUCLEOTIDE SEQUENCE [LARGE SCALE GENOMIC DNA]</scope>
    <source>
        <strain>DSM 2379 / NBRC 103807 / OttBd1</strain>
    </source>
</reference>
<feature type="chain" id="PRO_1000046235" description="Large ribosomal subunit protein uL11">
    <location>
        <begin position="1"/>
        <end position="140"/>
    </location>
</feature>
<keyword id="KW-0488">Methylation</keyword>
<keyword id="KW-1185">Reference proteome</keyword>
<keyword id="KW-0687">Ribonucleoprotein</keyword>
<keyword id="KW-0689">Ribosomal protein</keyword>
<keyword id="KW-0694">RNA-binding</keyword>
<keyword id="KW-0699">rRNA-binding</keyword>
<evidence type="ECO:0000255" key="1">
    <source>
        <dbReference type="HAMAP-Rule" id="MF_00736"/>
    </source>
</evidence>
<evidence type="ECO:0000305" key="2"/>
<organism>
    <name type="scientific">Pelobacter propionicus (strain DSM 2379 / NBRC 103807 / OttBd1)</name>
    <dbReference type="NCBI Taxonomy" id="338966"/>
    <lineage>
        <taxon>Bacteria</taxon>
        <taxon>Pseudomonadati</taxon>
        <taxon>Thermodesulfobacteriota</taxon>
        <taxon>Desulfuromonadia</taxon>
        <taxon>Desulfuromonadales</taxon>
        <taxon>Desulfuromonadaceae</taxon>
        <taxon>Pelobacter</taxon>
    </lineage>
</organism>
<comment type="function">
    <text evidence="1">Forms part of the ribosomal stalk which helps the ribosome interact with GTP-bound translation factors.</text>
</comment>
<comment type="subunit">
    <text evidence="1">Part of the ribosomal stalk of the 50S ribosomal subunit. Interacts with L10 and the large rRNA to form the base of the stalk. L10 forms an elongated spine to which L12 dimers bind in a sequential fashion forming a multimeric L10(L12)X complex.</text>
</comment>
<comment type="PTM">
    <text evidence="1">One or more lysine residues are methylated.</text>
</comment>
<comment type="similarity">
    <text evidence="1">Belongs to the universal ribosomal protein uL11 family.</text>
</comment>
<accession>A1ALT0</accession>
<gene>
    <name evidence="1" type="primary">rplK</name>
    <name type="ordered locus">Ppro_0669</name>
</gene>